<comment type="similarity">
    <text evidence="1">Belongs to the UPF0246 family.</text>
</comment>
<evidence type="ECO:0000255" key="1">
    <source>
        <dbReference type="HAMAP-Rule" id="MF_00652"/>
    </source>
</evidence>
<proteinExistence type="inferred from homology"/>
<protein>
    <recommendedName>
        <fullName evidence="1">UPF0246 protein SPH_1662</fullName>
    </recommendedName>
</protein>
<sequence>MKILIPTAKEMNTDLPSIEAIPLKPESQAVLDALALYSASQLESFYKVSAEKAAEEFQNIQALKRQTAQHYPALKLFDGLMYRNIKRDKLTEAEQDYLENHVFITSALYGVVPVLSPMAPHRLDFLMKLKVAGKTLKSHWKAAYDETLKKEEVIFSLLSSEFETVFSKEIRAKMVTFKFMEDRGGQLKIHSTISKKARGAFLTALIENQVQTVGEARRLNFAGFVYREDLSQPQGLVFVKEV</sequence>
<gene>
    <name type="ordered locus">SPH_1662</name>
</gene>
<reference key="1">
    <citation type="journal article" date="2010" name="Genome Biol.">
        <title>Structure and dynamics of the pan-genome of Streptococcus pneumoniae and closely related species.</title>
        <authorList>
            <person name="Donati C."/>
            <person name="Hiller N.L."/>
            <person name="Tettelin H."/>
            <person name="Muzzi A."/>
            <person name="Croucher N.J."/>
            <person name="Angiuoli S.V."/>
            <person name="Oggioni M."/>
            <person name="Dunning Hotopp J.C."/>
            <person name="Hu F.Z."/>
            <person name="Riley D.R."/>
            <person name="Covacci A."/>
            <person name="Mitchell T.J."/>
            <person name="Bentley S.D."/>
            <person name="Kilian M."/>
            <person name="Ehrlich G.D."/>
            <person name="Rappuoli R."/>
            <person name="Moxon E.R."/>
            <person name="Masignani V."/>
        </authorList>
    </citation>
    <scope>NUCLEOTIDE SEQUENCE [LARGE SCALE GENOMIC DNA]</scope>
    <source>
        <strain>Hungary19A-6</strain>
    </source>
</reference>
<accession>B1ICW8</accession>
<feature type="chain" id="PRO_1000131149" description="UPF0246 protein SPH_1662">
    <location>
        <begin position="1"/>
        <end position="242"/>
    </location>
</feature>
<name>Y1662_STRPI</name>
<dbReference type="EMBL" id="CP000936">
    <property type="protein sequence ID" value="ACA37106.1"/>
    <property type="molecule type" value="Genomic_DNA"/>
</dbReference>
<dbReference type="SMR" id="B1ICW8"/>
<dbReference type="KEGG" id="spv:SPH_1662"/>
<dbReference type="HOGENOM" id="CLU_061989_2_1_9"/>
<dbReference type="Proteomes" id="UP000002163">
    <property type="component" value="Chromosome"/>
</dbReference>
<dbReference type="GO" id="GO:0005829">
    <property type="term" value="C:cytosol"/>
    <property type="evidence" value="ECO:0007669"/>
    <property type="project" value="TreeGrafter"/>
</dbReference>
<dbReference type="GO" id="GO:0033194">
    <property type="term" value="P:response to hydroperoxide"/>
    <property type="evidence" value="ECO:0007669"/>
    <property type="project" value="TreeGrafter"/>
</dbReference>
<dbReference type="HAMAP" id="MF_00652">
    <property type="entry name" value="UPF0246"/>
    <property type="match status" value="1"/>
</dbReference>
<dbReference type="InterPro" id="IPR005583">
    <property type="entry name" value="YaaA"/>
</dbReference>
<dbReference type="NCBIfam" id="NF002543">
    <property type="entry name" value="PRK02101.1-4"/>
    <property type="match status" value="1"/>
</dbReference>
<dbReference type="PANTHER" id="PTHR30283:SF4">
    <property type="entry name" value="PEROXIDE STRESS RESISTANCE PROTEIN YAAA"/>
    <property type="match status" value="1"/>
</dbReference>
<dbReference type="PANTHER" id="PTHR30283">
    <property type="entry name" value="PEROXIDE STRESS RESPONSE PROTEIN YAAA"/>
    <property type="match status" value="1"/>
</dbReference>
<dbReference type="Pfam" id="PF03883">
    <property type="entry name" value="H2O2_YaaD"/>
    <property type="match status" value="1"/>
</dbReference>
<organism>
    <name type="scientific">Streptococcus pneumoniae (strain Hungary19A-6)</name>
    <dbReference type="NCBI Taxonomy" id="487214"/>
    <lineage>
        <taxon>Bacteria</taxon>
        <taxon>Bacillati</taxon>
        <taxon>Bacillota</taxon>
        <taxon>Bacilli</taxon>
        <taxon>Lactobacillales</taxon>
        <taxon>Streptococcaceae</taxon>
        <taxon>Streptococcus</taxon>
    </lineage>
</organism>